<organism>
    <name type="scientific">Pseudomonas aeruginosa (strain UCBPP-PA14)</name>
    <dbReference type="NCBI Taxonomy" id="208963"/>
    <lineage>
        <taxon>Bacteria</taxon>
        <taxon>Pseudomonadati</taxon>
        <taxon>Pseudomonadota</taxon>
        <taxon>Gammaproteobacteria</taxon>
        <taxon>Pseudomonadales</taxon>
        <taxon>Pseudomonadaceae</taxon>
        <taxon>Pseudomonas</taxon>
    </lineage>
</organism>
<sequence>MARIAGVNIPDNKHTVISLTYIYGVGRTTAQSICAATGVNPAAKIKDLSDEQIDQLRNEVAKITTEGDLRREINMNIKRLMDLGCYRGLRHRRGLPVRGQRTKTNARTRKGPRKPIRK</sequence>
<dbReference type="EMBL" id="CP000438">
    <property type="protein sequence ID" value="ABJ13512.1"/>
    <property type="molecule type" value="Genomic_DNA"/>
</dbReference>
<dbReference type="RefSeq" id="WP_003093692.1">
    <property type="nucleotide sequence ID" value="NZ_CP034244.1"/>
</dbReference>
<dbReference type="SMR" id="Q02T58"/>
<dbReference type="KEGG" id="pau:PA14_09080"/>
<dbReference type="PseudoCAP" id="PA14_09080"/>
<dbReference type="HOGENOM" id="CLU_103849_1_2_6"/>
<dbReference type="BioCyc" id="PAER208963:G1G74-758-MONOMER"/>
<dbReference type="Proteomes" id="UP000000653">
    <property type="component" value="Chromosome"/>
</dbReference>
<dbReference type="GO" id="GO:0005829">
    <property type="term" value="C:cytosol"/>
    <property type="evidence" value="ECO:0007669"/>
    <property type="project" value="TreeGrafter"/>
</dbReference>
<dbReference type="GO" id="GO:0015935">
    <property type="term" value="C:small ribosomal subunit"/>
    <property type="evidence" value="ECO:0007669"/>
    <property type="project" value="TreeGrafter"/>
</dbReference>
<dbReference type="GO" id="GO:0019843">
    <property type="term" value="F:rRNA binding"/>
    <property type="evidence" value="ECO:0007669"/>
    <property type="project" value="UniProtKB-UniRule"/>
</dbReference>
<dbReference type="GO" id="GO:0003735">
    <property type="term" value="F:structural constituent of ribosome"/>
    <property type="evidence" value="ECO:0007669"/>
    <property type="project" value="InterPro"/>
</dbReference>
<dbReference type="GO" id="GO:0000049">
    <property type="term" value="F:tRNA binding"/>
    <property type="evidence" value="ECO:0007669"/>
    <property type="project" value="UniProtKB-UniRule"/>
</dbReference>
<dbReference type="GO" id="GO:0006412">
    <property type="term" value="P:translation"/>
    <property type="evidence" value="ECO:0007669"/>
    <property type="project" value="UniProtKB-UniRule"/>
</dbReference>
<dbReference type="FunFam" id="1.10.8.50:FF:000001">
    <property type="entry name" value="30S ribosomal protein S13"/>
    <property type="match status" value="1"/>
</dbReference>
<dbReference type="FunFam" id="4.10.910.10:FF:000001">
    <property type="entry name" value="30S ribosomal protein S13"/>
    <property type="match status" value="1"/>
</dbReference>
<dbReference type="Gene3D" id="1.10.8.50">
    <property type="match status" value="1"/>
</dbReference>
<dbReference type="Gene3D" id="4.10.910.10">
    <property type="entry name" value="30s ribosomal protein s13, domain 2"/>
    <property type="match status" value="1"/>
</dbReference>
<dbReference type="HAMAP" id="MF_01315">
    <property type="entry name" value="Ribosomal_uS13"/>
    <property type="match status" value="1"/>
</dbReference>
<dbReference type="InterPro" id="IPR027437">
    <property type="entry name" value="Rbsml_uS13_C"/>
</dbReference>
<dbReference type="InterPro" id="IPR001892">
    <property type="entry name" value="Ribosomal_uS13"/>
</dbReference>
<dbReference type="InterPro" id="IPR010979">
    <property type="entry name" value="Ribosomal_uS13-like_H2TH"/>
</dbReference>
<dbReference type="InterPro" id="IPR019980">
    <property type="entry name" value="Ribosomal_uS13_bac-type"/>
</dbReference>
<dbReference type="InterPro" id="IPR018269">
    <property type="entry name" value="Ribosomal_uS13_CS"/>
</dbReference>
<dbReference type="NCBIfam" id="TIGR03631">
    <property type="entry name" value="uS13_bact"/>
    <property type="match status" value="1"/>
</dbReference>
<dbReference type="PANTHER" id="PTHR10871">
    <property type="entry name" value="30S RIBOSOMAL PROTEIN S13/40S RIBOSOMAL PROTEIN S18"/>
    <property type="match status" value="1"/>
</dbReference>
<dbReference type="PANTHER" id="PTHR10871:SF1">
    <property type="entry name" value="SMALL RIBOSOMAL SUBUNIT PROTEIN US13M"/>
    <property type="match status" value="1"/>
</dbReference>
<dbReference type="Pfam" id="PF00416">
    <property type="entry name" value="Ribosomal_S13"/>
    <property type="match status" value="1"/>
</dbReference>
<dbReference type="PIRSF" id="PIRSF002134">
    <property type="entry name" value="Ribosomal_S13"/>
    <property type="match status" value="1"/>
</dbReference>
<dbReference type="SUPFAM" id="SSF46946">
    <property type="entry name" value="S13-like H2TH domain"/>
    <property type="match status" value="1"/>
</dbReference>
<dbReference type="PROSITE" id="PS00646">
    <property type="entry name" value="RIBOSOMAL_S13_1"/>
    <property type="match status" value="1"/>
</dbReference>
<dbReference type="PROSITE" id="PS50159">
    <property type="entry name" value="RIBOSOMAL_S13_2"/>
    <property type="match status" value="1"/>
</dbReference>
<protein>
    <recommendedName>
        <fullName evidence="1">Small ribosomal subunit protein uS13</fullName>
    </recommendedName>
    <alternativeName>
        <fullName evidence="3">30S ribosomal protein S13</fullName>
    </alternativeName>
</protein>
<keyword id="KW-0687">Ribonucleoprotein</keyword>
<keyword id="KW-0689">Ribosomal protein</keyword>
<keyword id="KW-0694">RNA-binding</keyword>
<keyword id="KW-0699">rRNA-binding</keyword>
<keyword id="KW-0820">tRNA-binding</keyword>
<feature type="chain" id="PRO_0000306680" description="Small ribosomal subunit protein uS13">
    <location>
        <begin position="1"/>
        <end position="118"/>
    </location>
</feature>
<feature type="region of interest" description="Disordered" evidence="2">
    <location>
        <begin position="94"/>
        <end position="118"/>
    </location>
</feature>
<evidence type="ECO:0000255" key="1">
    <source>
        <dbReference type="HAMAP-Rule" id="MF_01315"/>
    </source>
</evidence>
<evidence type="ECO:0000256" key="2">
    <source>
        <dbReference type="SAM" id="MobiDB-lite"/>
    </source>
</evidence>
<evidence type="ECO:0000305" key="3"/>
<comment type="function">
    <text evidence="1">Located at the top of the head of the 30S subunit, it contacts several helices of the 16S rRNA. In the 70S ribosome it contacts the 23S rRNA (bridge B1a) and protein L5 of the 50S subunit (bridge B1b), connecting the 2 subunits; these bridges are implicated in subunit movement. Contacts the tRNAs in the A and P-sites.</text>
</comment>
<comment type="subunit">
    <text evidence="1">Part of the 30S ribosomal subunit. Forms a loose heterodimer with protein S19. Forms two bridges to the 50S subunit in the 70S ribosome.</text>
</comment>
<comment type="similarity">
    <text evidence="1">Belongs to the universal ribosomal protein uS13 family.</text>
</comment>
<gene>
    <name evidence="1" type="primary">rpsM</name>
    <name type="ordered locus">PA14_09080</name>
</gene>
<reference key="1">
    <citation type="journal article" date="2006" name="Genome Biol.">
        <title>Genomic analysis reveals that Pseudomonas aeruginosa virulence is combinatorial.</title>
        <authorList>
            <person name="Lee D.G."/>
            <person name="Urbach J.M."/>
            <person name="Wu G."/>
            <person name="Liberati N.T."/>
            <person name="Feinbaum R.L."/>
            <person name="Miyata S."/>
            <person name="Diggins L.T."/>
            <person name="He J."/>
            <person name="Saucier M."/>
            <person name="Deziel E."/>
            <person name="Friedman L."/>
            <person name="Li L."/>
            <person name="Grills G."/>
            <person name="Montgomery K."/>
            <person name="Kucherlapati R."/>
            <person name="Rahme L.G."/>
            <person name="Ausubel F.M."/>
        </authorList>
    </citation>
    <scope>NUCLEOTIDE SEQUENCE [LARGE SCALE GENOMIC DNA]</scope>
    <source>
        <strain>UCBPP-PA14</strain>
    </source>
</reference>
<accession>Q02T58</accession>
<name>RS13_PSEAB</name>
<proteinExistence type="inferred from homology"/>